<comment type="function">
    <text evidence="1">Produces ATP from ADP in the presence of a proton gradient across the membrane. The catalytic sites are hosted primarily by the beta subunits.</text>
</comment>
<comment type="catalytic activity">
    <reaction evidence="1">
        <text>ATP + H2O + 4 H(+)(in) = ADP + phosphate + 5 H(+)(out)</text>
        <dbReference type="Rhea" id="RHEA:57720"/>
        <dbReference type="ChEBI" id="CHEBI:15377"/>
        <dbReference type="ChEBI" id="CHEBI:15378"/>
        <dbReference type="ChEBI" id="CHEBI:30616"/>
        <dbReference type="ChEBI" id="CHEBI:43474"/>
        <dbReference type="ChEBI" id="CHEBI:456216"/>
        <dbReference type="EC" id="7.1.2.2"/>
    </reaction>
</comment>
<comment type="subunit">
    <text evidence="1">F-type ATPases have 2 components, CF(1) - the catalytic core - and CF(0) - the membrane proton channel. CF(1) has five subunits: alpha(3), beta(3), gamma(1), delta(1), epsilon(1). CF(0) has three main subunits: a(1), b(2) and c(9-12). The alpha and beta chains form an alternating ring which encloses part of the gamma chain. CF(1) is attached to CF(0) by a central stalk formed by the gamma and epsilon chains, while a peripheral stalk is formed by the delta and b chains.</text>
</comment>
<comment type="subcellular location">
    <subcellularLocation>
        <location evidence="1">Cell membrane</location>
        <topology evidence="1">Peripheral membrane protein</topology>
    </subcellularLocation>
</comment>
<comment type="similarity">
    <text evidence="1">Belongs to the ATPase alpha/beta chains family.</text>
</comment>
<comment type="sequence caution" evidence="2">
    <conflict type="erroneous initiation">
        <sequence resource="EMBL-CDS" id="AAW71277"/>
    </conflict>
</comment>
<name>ATPB_WOLTR</name>
<organism>
    <name type="scientific">Wolbachia sp. subsp. Brugia malayi (strain TRS)</name>
    <dbReference type="NCBI Taxonomy" id="292805"/>
    <lineage>
        <taxon>Bacteria</taxon>
        <taxon>Pseudomonadati</taxon>
        <taxon>Pseudomonadota</taxon>
        <taxon>Alphaproteobacteria</taxon>
        <taxon>Rickettsiales</taxon>
        <taxon>Anaplasmataceae</taxon>
        <taxon>Wolbachieae</taxon>
        <taxon>Wolbachia</taxon>
    </lineage>
</organism>
<proteinExistence type="inferred from homology"/>
<gene>
    <name evidence="1" type="primary">atpD</name>
    <name type="ordered locus">Wbm0689</name>
</gene>
<feature type="chain" id="PRO_0000254426" description="ATP synthase subunit beta">
    <location>
        <begin position="1"/>
        <end position="480"/>
    </location>
</feature>
<feature type="binding site" evidence="1">
    <location>
        <begin position="152"/>
        <end position="159"/>
    </location>
    <ligand>
        <name>ATP</name>
        <dbReference type="ChEBI" id="CHEBI:30616"/>
    </ligand>
</feature>
<dbReference type="EC" id="7.1.2.2" evidence="1"/>
<dbReference type="EMBL" id="AE017321">
    <property type="protein sequence ID" value="AAW71277.1"/>
    <property type="status" value="ALT_INIT"/>
    <property type="molecule type" value="Genomic_DNA"/>
</dbReference>
<dbReference type="RefSeq" id="WP_041571591.1">
    <property type="nucleotide sequence ID" value="NC_006833.1"/>
</dbReference>
<dbReference type="SMR" id="Q5GRU7"/>
<dbReference type="STRING" id="292805.Wbm0689"/>
<dbReference type="KEGG" id="wbm:Wbm0689"/>
<dbReference type="eggNOG" id="COG0055">
    <property type="taxonomic scope" value="Bacteria"/>
</dbReference>
<dbReference type="HOGENOM" id="CLU_022398_0_2_5"/>
<dbReference type="Proteomes" id="UP000000534">
    <property type="component" value="Chromosome"/>
</dbReference>
<dbReference type="GO" id="GO:0005886">
    <property type="term" value="C:plasma membrane"/>
    <property type="evidence" value="ECO:0007669"/>
    <property type="project" value="UniProtKB-SubCell"/>
</dbReference>
<dbReference type="GO" id="GO:0045259">
    <property type="term" value="C:proton-transporting ATP synthase complex"/>
    <property type="evidence" value="ECO:0007669"/>
    <property type="project" value="UniProtKB-KW"/>
</dbReference>
<dbReference type="GO" id="GO:0005524">
    <property type="term" value="F:ATP binding"/>
    <property type="evidence" value="ECO:0007669"/>
    <property type="project" value="UniProtKB-UniRule"/>
</dbReference>
<dbReference type="GO" id="GO:0016887">
    <property type="term" value="F:ATP hydrolysis activity"/>
    <property type="evidence" value="ECO:0007669"/>
    <property type="project" value="InterPro"/>
</dbReference>
<dbReference type="GO" id="GO:0046933">
    <property type="term" value="F:proton-transporting ATP synthase activity, rotational mechanism"/>
    <property type="evidence" value="ECO:0007669"/>
    <property type="project" value="UniProtKB-UniRule"/>
</dbReference>
<dbReference type="CDD" id="cd18110">
    <property type="entry name" value="ATP-synt_F1_beta_C"/>
    <property type="match status" value="1"/>
</dbReference>
<dbReference type="CDD" id="cd18115">
    <property type="entry name" value="ATP-synt_F1_beta_N"/>
    <property type="match status" value="1"/>
</dbReference>
<dbReference type="CDD" id="cd01133">
    <property type="entry name" value="F1-ATPase_beta_CD"/>
    <property type="match status" value="1"/>
</dbReference>
<dbReference type="FunFam" id="1.10.1140.10:FF:000001">
    <property type="entry name" value="ATP synthase subunit beta"/>
    <property type="match status" value="1"/>
</dbReference>
<dbReference type="FunFam" id="3.40.50.300:FF:000026">
    <property type="entry name" value="ATP synthase subunit beta"/>
    <property type="match status" value="1"/>
</dbReference>
<dbReference type="Gene3D" id="2.40.10.170">
    <property type="match status" value="1"/>
</dbReference>
<dbReference type="Gene3D" id="1.10.1140.10">
    <property type="entry name" value="Bovine Mitochondrial F1-atpase, Atp Synthase Beta Chain, Chain D, domain 3"/>
    <property type="match status" value="1"/>
</dbReference>
<dbReference type="Gene3D" id="3.40.50.300">
    <property type="entry name" value="P-loop containing nucleotide triphosphate hydrolases"/>
    <property type="match status" value="1"/>
</dbReference>
<dbReference type="HAMAP" id="MF_01347">
    <property type="entry name" value="ATP_synth_beta_bact"/>
    <property type="match status" value="1"/>
</dbReference>
<dbReference type="InterPro" id="IPR003593">
    <property type="entry name" value="AAA+_ATPase"/>
</dbReference>
<dbReference type="InterPro" id="IPR055190">
    <property type="entry name" value="ATP-synt_VA_C"/>
</dbReference>
<dbReference type="InterPro" id="IPR005722">
    <property type="entry name" value="ATP_synth_F1_bsu"/>
</dbReference>
<dbReference type="InterPro" id="IPR020003">
    <property type="entry name" value="ATPase_a/bsu_AS"/>
</dbReference>
<dbReference type="InterPro" id="IPR050053">
    <property type="entry name" value="ATPase_alpha/beta_chains"/>
</dbReference>
<dbReference type="InterPro" id="IPR004100">
    <property type="entry name" value="ATPase_F1/V1/A1_a/bsu_N"/>
</dbReference>
<dbReference type="InterPro" id="IPR036121">
    <property type="entry name" value="ATPase_F1/V1/A1_a/bsu_N_sf"/>
</dbReference>
<dbReference type="InterPro" id="IPR000194">
    <property type="entry name" value="ATPase_F1/V1/A1_a/bsu_nucl-bd"/>
</dbReference>
<dbReference type="InterPro" id="IPR024034">
    <property type="entry name" value="ATPase_F1/V1_b/a_C"/>
</dbReference>
<dbReference type="InterPro" id="IPR027417">
    <property type="entry name" value="P-loop_NTPase"/>
</dbReference>
<dbReference type="NCBIfam" id="TIGR01039">
    <property type="entry name" value="atpD"/>
    <property type="match status" value="1"/>
</dbReference>
<dbReference type="PANTHER" id="PTHR15184">
    <property type="entry name" value="ATP SYNTHASE"/>
    <property type="match status" value="1"/>
</dbReference>
<dbReference type="PANTHER" id="PTHR15184:SF71">
    <property type="entry name" value="ATP SYNTHASE SUBUNIT BETA, MITOCHONDRIAL"/>
    <property type="match status" value="1"/>
</dbReference>
<dbReference type="Pfam" id="PF00006">
    <property type="entry name" value="ATP-synt_ab"/>
    <property type="match status" value="1"/>
</dbReference>
<dbReference type="Pfam" id="PF02874">
    <property type="entry name" value="ATP-synt_ab_N"/>
    <property type="match status" value="1"/>
</dbReference>
<dbReference type="Pfam" id="PF22919">
    <property type="entry name" value="ATP-synt_VA_C"/>
    <property type="match status" value="1"/>
</dbReference>
<dbReference type="SMART" id="SM00382">
    <property type="entry name" value="AAA"/>
    <property type="match status" value="1"/>
</dbReference>
<dbReference type="SUPFAM" id="SSF47917">
    <property type="entry name" value="C-terminal domain of alpha and beta subunits of F1 ATP synthase"/>
    <property type="match status" value="1"/>
</dbReference>
<dbReference type="SUPFAM" id="SSF50615">
    <property type="entry name" value="N-terminal domain of alpha and beta subunits of F1 ATP synthase"/>
    <property type="match status" value="1"/>
</dbReference>
<dbReference type="SUPFAM" id="SSF52540">
    <property type="entry name" value="P-loop containing nucleoside triphosphate hydrolases"/>
    <property type="match status" value="1"/>
</dbReference>
<dbReference type="PROSITE" id="PS00152">
    <property type="entry name" value="ATPASE_ALPHA_BETA"/>
    <property type="match status" value="1"/>
</dbReference>
<sequence length="480" mass="52431">MNVGRTVKVTQAVVDLKFEGELPRIFNALKSKLEYRGKELILEVSQHIGDNIVRCIAMDSTNGVSRNDEFVDTGAPISVPVGRSTLGRIFNVVGEVIDECGPLKGKYDLESIHRVPPSFTEQKIQEEVLVTGIKVIDLLAPYLKGGKIGLFGGAGVGKTVLIMELINNIAKAHKGFSVFAGVGERTREGNDLYHEMITSNVINVNEHEKSQAVLVYGQMNEPPGARARVALTALTMAEYFRDHENQDVLFFVDNIFRFTQAGSEISALLGRMPSAVGYQPTLATDMGAMQERIASTTSGSITSVQAIYVPADDLTDPAPAATFSHLDSTTVLSRQIAEMGIYPAVDPLDSTSQSLSAEIVGEEHYKVTSEVKRILQTYKSLQDIIAILGMDELSDEDKITVDRARKIQKFFSQPFHVAEVFTGMPGKFVSLSDTVSSFKGIVEGEYDHLPEAAFYMVGNIDEAIKKAELIKDETKVGAKS</sequence>
<keyword id="KW-0066">ATP synthesis</keyword>
<keyword id="KW-0067">ATP-binding</keyword>
<keyword id="KW-1003">Cell membrane</keyword>
<keyword id="KW-0139">CF(1)</keyword>
<keyword id="KW-0375">Hydrogen ion transport</keyword>
<keyword id="KW-0406">Ion transport</keyword>
<keyword id="KW-0472">Membrane</keyword>
<keyword id="KW-0547">Nucleotide-binding</keyword>
<keyword id="KW-1185">Reference proteome</keyword>
<keyword id="KW-1278">Translocase</keyword>
<keyword id="KW-0813">Transport</keyword>
<reference key="1">
    <citation type="journal article" date="2005" name="PLoS Biol.">
        <title>The Wolbachia genome of Brugia malayi: endosymbiont evolution within a human pathogenic nematode.</title>
        <authorList>
            <person name="Foster J."/>
            <person name="Ganatra M."/>
            <person name="Kamal I."/>
            <person name="Ware J."/>
            <person name="Makarova K."/>
            <person name="Ivanova N."/>
            <person name="Bhattacharyya A."/>
            <person name="Kapatral V."/>
            <person name="Kumar S."/>
            <person name="Posfai J."/>
            <person name="Vincze T."/>
            <person name="Ingram J."/>
            <person name="Moran L."/>
            <person name="Lapidus A."/>
            <person name="Omelchenko M."/>
            <person name="Kyrpides N."/>
            <person name="Ghedin E."/>
            <person name="Wang S."/>
            <person name="Goltsman E."/>
            <person name="Joukov V."/>
            <person name="Ostrovskaya O."/>
            <person name="Tsukerman K."/>
            <person name="Mazur M."/>
            <person name="Comb D."/>
            <person name="Koonin E."/>
            <person name="Slatko B."/>
        </authorList>
    </citation>
    <scope>NUCLEOTIDE SEQUENCE [LARGE SCALE GENOMIC DNA]</scope>
    <source>
        <strain>TRS</strain>
    </source>
</reference>
<evidence type="ECO:0000255" key="1">
    <source>
        <dbReference type="HAMAP-Rule" id="MF_01347"/>
    </source>
</evidence>
<evidence type="ECO:0000305" key="2"/>
<accession>Q5GRU7</accession>
<protein>
    <recommendedName>
        <fullName evidence="1">ATP synthase subunit beta</fullName>
        <ecNumber evidence="1">7.1.2.2</ecNumber>
    </recommendedName>
    <alternativeName>
        <fullName evidence="1">ATP synthase F1 sector subunit beta</fullName>
    </alternativeName>
    <alternativeName>
        <fullName evidence="1">F-ATPase subunit beta</fullName>
    </alternativeName>
</protein>